<sequence length="382" mass="43394">MYQILIVLFLFALLYIVVWPFYQAFYHINHAQQDYNMTLTDRMDYIEAVMRRRQYVPMEALPVVRFDTNLGTLAGETLRCMSVPLYVSEIDLPMFDCGEVCEDPNAVYFFVGEGDTYVVNGHKLAVGGYCTTNSVPRDCNRETSVVLMSLNQWTCIAEDPRYFAGTGNMTQLAGRQHFDRILPGQSGRNVLFDRLLGREVNVATNTFRRSWDELLEDGSRRFEMRCNARDNNNNLMFVNPRNPLECLPNVCTDVNYVHSTVRPVFESGECDCGDEAVTRVRHVVPGDRTSMCASIVDGFDTNTASHRFRVECVNTHTPIDRFSSDKLLCPSDTFDSNTDAAFAFEVPGSYPLSGNGLDEPTHRVFLDTRSRVQYNDVRGALT</sequence>
<dbReference type="EMBL" id="U75930">
    <property type="protein sequence ID" value="AAC59019.1"/>
    <property type="molecule type" value="Genomic_DNA"/>
</dbReference>
<dbReference type="RefSeq" id="NP_046176.1">
    <property type="nucleotide sequence ID" value="NC_001875.2"/>
</dbReference>
<dbReference type="KEGG" id="vg:911975"/>
<dbReference type="OrthoDB" id="7191at10239"/>
<dbReference type="Proteomes" id="UP000009248">
    <property type="component" value="Genome"/>
</dbReference>
<dbReference type="InterPro" id="IPR006725">
    <property type="entry name" value="PIF2"/>
</dbReference>
<dbReference type="Pfam" id="PF04631">
    <property type="entry name" value="PIF2"/>
    <property type="match status" value="1"/>
</dbReference>
<gene>
    <name type="ORF">ORF20</name>
</gene>
<organism>
    <name type="scientific">Orgyia pseudotsugata multicapsid polyhedrosis virus</name>
    <name type="common">OpMNPV</name>
    <dbReference type="NCBI Taxonomy" id="262177"/>
    <lineage>
        <taxon>Viruses</taxon>
        <taxon>Viruses incertae sedis</taxon>
        <taxon>Naldaviricetes</taxon>
        <taxon>Lefavirales</taxon>
        <taxon>Baculoviridae</taxon>
        <taxon>Alphabaculovirus</taxon>
        <taxon>Alphabaculovirus orpseudotsugatae</taxon>
    </lineage>
</organism>
<proteinExistence type="predicted"/>
<accession>O10281</accession>
<organismHost>
    <name type="scientific">Orgyia pseudotsugata</name>
    <name type="common">Douglas-fir tussock moth</name>
    <dbReference type="NCBI Taxonomy" id="33414"/>
</organismHost>
<name>Y022_NPVOP</name>
<feature type="chain" id="PRO_0000132958" description="Uncharacterized 43.4 kDa protein">
    <location>
        <begin position="1"/>
        <end position="382"/>
    </location>
</feature>
<protein>
    <recommendedName>
        <fullName>Uncharacterized 43.4 kDa protein</fullName>
    </recommendedName>
</protein>
<keyword id="KW-1185">Reference proteome</keyword>
<reference key="1">
    <citation type="journal article" date="1997" name="Virology">
        <title>The sequence of the Orgyia pseudotsugata multinucleocapsid nuclear polyhedrosis virus genome.</title>
        <authorList>
            <person name="Ahrens C.H."/>
            <person name="Russell R.R."/>
            <person name="Funk C.J."/>
            <person name="Evans J."/>
            <person name="Harwood S."/>
            <person name="Rohrmann G.F."/>
        </authorList>
    </citation>
    <scope>NUCLEOTIDE SEQUENCE [LARGE SCALE GENOMIC DNA]</scope>
</reference>